<proteinExistence type="evidence at protein level"/>
<accession>P19954</accession>
<accession>A0A0K9QHQ6</accession>
<gene>
    <name type="primary">PSRP1</name>
    <name type="synonym">RPS22</name>
    <name type="synonym">RPS30</name>
    <name type="ORF">SOVF_177810</name>
</gene>
<feature type="transit peptide" description="Chloroplast" evidence="1 3">
    <location>
        <begin position="1"/>
        <end position="66"/>
    </location>
</feature>
<feature type="chain" id="PRO_0000030635" description="Ribosome-binding factor PSRP1, chloroplastic">
    <location>
        <begin position="67"/>
        <end position="302"/>
    </location>
</feature>
<feature type="sequence conflict" description="In Ref. 4; AAA34039." evidence="11" ref="4">
    <original>P</original>
    <variation>L</variation>
    <location>
        <position position="29"/>
    </location>
</feature>
<protein>
    <recommendedName>
        <fullName evidence="6">Ribosome-binding factor PSRP1, chloroplastic</fullName>
    </recommendedName>
    <alternativeName>
        <fullName>30S ribosomal protein 1</fullName>
    </alternativeName>
    <alternativeName>
        <fullName evidence="9">CS-S5</fullName>
        <shortName>CS5</shortName>
    </alternativeName>
    <alternativeName>
        <fullName evidence="8">Plastid-specific 30S ribosomal protein 1</fullName>
        <shortName evidence="8">PSrp-1</shortName>
    </alternativeName>
    <alternativeName>
        <fullName>Ribosomal protein 1</fullName>
    </alternativeName>
    <alternativeName>
        <fullName evidence="7">S22</fullName>
    </alternativeName>
    <alternativeName>
        <fullName evidence="10">Translation factor pY</fullName>
    </alternativeName>
</protein>
<organism>
    <name type="scientific">Spinacia oleracea</name>
    <name type="common">Spinach</name>
    <dbReference type="NCBI Taxonomy" id="3562"/>
    <lineage>
        <taxon>Eukaryota</taxon>
        <taxon>Viridiplantae</taxon>
        <taxon>Streptophyta</taxon>
        <taxon>Embryophyta</taxon>
        <taxon>Tracheophyta</taxon>
        <taxon>Spermatophyta</taxon>
        <taxon>Magnoliopsida</taxon>
        <taxon>eudicotyledons</taxon>
        <taxon>Gunneridae</taxon>
        <taxon>Pentapetalae</taxon>
        <taxon>Caryophyllales</taxon>
        <taxon>Chenopodiaceae</taxon>
        <taxon>Chenopodioideae</taxon>
        <taxon>Anserineae</taxon>
        <taxon>Spinacia</taxon>
    </lineage>
</organism>
<keyword id="KW-0002">3D-structure</keyword>
<keyword id="KW-0150">Chloroplast</keyword>
<keyword id="KW-0903">Direct protein sequencing</keyword>
<keyword id="KW-0934">Plastid</keyword>
<keyword id="KW-1185">Reference proteome</keyword>
<keyword id="KW-0694">RNA-binding</keyword>
<keyword id="KW-0699">rRNA-binding</keyword>
<keyword id="KW-0809">Transit peptide</keyword>
<keyword id="KW-0810">Translation regulation</keyword>
<evidence type="ECO:0000269" key="1">
    <source>
    </source>
</evidence>
<evidence type="ECO:0000269" key="2">
    <source>
    </source>
</evidence>
<evidence type="ECO:0000269" key="3">
    <source>
    </source>
</evidence>
<evidence type="ECO:0000269" key="4">
    <source>
    </source>
</evidence>
<evidence type="ECO:0000269" key="5">
    <source>
    </source>
</evidence>
<evidence type="ECO:0000303" key="6">
    <source>
    </source>
</evidence>
<evidence type="ECO:0000303" key="7">
    <source>
    </source>
</evidence>
<evidence type="ECO:0000303" key="8">
    <source>
    </source>
</evidence>
<evidence type="ECO:0000303" key="9">
    <source>
    </source>
</evidence>
<evidence type="ECO:0000303" key="10">
    <source>
    </source>
</evidence>
<evidence type="ECO:0000305" key="11"/>
<evidence type="ECO:0000305" key="12">
    <source>
    </source>
</evidence>
<evidence type="ECO:0000305" key="13">
    <source>
    </source>
</evidence>
<evidence type="ECO:0000305" key="14">
    <source>
    </source>
</evidence>
<evidence type="ECO:0000305" key="15">
    <source>
    </source>
</evidence>
<evidence type="ECO:0000305" key="16">
    <source>
    </source>
</evidence>
<evidence type="ECO:0000305" key="17">
    <source>
    </source>
</evidence>
<name>PRSP1_SPIOL</name>
<comment type="function">
    <text evidence="2 5">Ribosome-binding factor involved in light- and temperature-dependent control of protein synthesis. Interacts with 16S sRNA nucleotides at the A-site and P-site, where it protects the decoding center and inhibits translation by preventing tRNA binding. Stabilizes 70S ribosomes against dissociation. May be recycled by the combined action of ribosome-recycling factor (RRF) and EF-G.</text>
</comment>
<comment type="subunit">
    <text evidence="5">Binds to the mRNA channel of the chloroplast small ribosomal subunit and interacts with 16S sRNA nucleotides at the A-site and P-site.</text>
</comment>
<comment type="subcellular location">
    <subcellularLocation>
        <location evidence="3 4 5">Plastid</location>
        <location evidence="3 4 5">Chloroplast stroma</location>
    </subcellularLocation>
</comment>
<comment type="mass spectrometry"/>
<comment type="mass spectrometry"/>
<comment type="similarity">
    <text evidence="11">Belongs to the HPF/YfiA ribosome-associated protein family. Long plastid HPF subfamily.</text>
</comment>
<comment type="caution">
    <text evidence="12 13 14 15 16 17">Was originally (PubMed:2693942, PubMed:2259340, PubMed:2376575, PubMed:1731992, PubMed:10874039, PubMed:18042701) thought to be a ribosomal protein.</text>
</comment>
<reference key="1">
    <citation type="journal article" date="1989" name="Mol. Gen. Genet.">
        <title>Presence in the stroma of chloroplasts of a large pool of a ribosomal protein not structurally related to any Escherichia coli ribosomal protein.</title>
        <authorList>
            <person name="Zhou D.-X."/>
            <person name="Mache R."/>
        </authorList>
    </citation>
    <scope>NUCLEOTIDE SEQUENCE [MRNA]</scope>
    <scope>SUBCELLULAR LOCATION</scope>
    <source>
        <strain>cv. Geant d'hiver</strain>
        <tissue>Leaf</tissue>
    </source>
</reference>
<reference key="2">
    <citation type="journal article" date="1990" name="Mol. Gen. Genet.">
        <title>Presence in the stroma of chloroplasts of a large pool of a ribosomal protein not structurally related to any Escherichia coli ribosomal protein.</title>
        <authorList>
            <person name="Zhou D.X."/>
            <person name="Mache R."/>
        </authorList>
    </citation>
    <scope>NUCLEOTIDE SEQUENCE [MRNA]</scope>
    <scope>SEQUENCE REVISION</scope>
</reference>
<reference key="3">
    <citation type="journal article" date="1990" name="J. Biol. Chem.">
        <title>Identification of a plastid-specific ribosomal protein in the 30 S subunit of chloroplast ribosomes and isolation of the cDNA clone encoding its cytoplasmic precursor.</title>
        <authorList>
            <person name="Johnson C.H."/>
            <person name="Kruft V."/>
            <person name="Subramanian A.R."/>
        </authorList>
    </citation>
    <scope>NUCLEOTIDE SEQUENCE [MRNA]</scope>
    <scope>PROTEIN SEQUENCE OF 67-96; 105-125; 140-165; 190-217 AND 230-259</scope>
    <scope>SUBCELLULAR LOCATION</scope>
    <source>
        <strain>cv. Alwaro</strain>
        <tissue>Leaf</tissue>
    </source>
</reference>
<reference key="4">
    <citation type="journal article" date="1992" name="Plant Mol. Biol.">
        <title>Organization and expression of the nuclear gene coding for the plastid-specific S22 ribosomal protein from spinach.</title>
        <authorList>
            <person name="Bisanz-Seyer C."/>
            <person name="Mache R."/>
        </authorList>
    </citation>
    <scope>NUCLEOTIDE SEQUENCE [GENOMIC DNA]</scope>
    <source>
        <strain>cv. Geant d'hiver</strain>
        <tissue>Leaf</tissue>
    </source>
</reference>
<reference key="5">
    <citation type="journal article" date="2014" name="Nature">
        <title>The genome of the recently domesticated crop plant sugar beet (Beta vulgaris).</title>
        <authorList>
            <person name="Dohm J.C."/>
            <person name="Minoche A.E."/>
            <person name="Holtgraewe D."/>
            <person name="Capella-Gutierrez S."/>
            <person name="Zakrzewski F."/>
            <person name="Tafer H."/>
            <person name="Rupp O."/>
            <person name="Soerensen T.R."/>
            <person name="Stracke R."/>
            <person name="Reinhardt R."/>
            <person name="Goesmann A."/>
            <person name="Kraft T."/>
            <person name="Schulz B."/>
            <person name="Stadler P.F."/>
            <person name="Schmidt T."/>
            <person name="Gabaldon T."/>
            <person name="Lehrach H."/>
            <person name="Weisshaar B."/>
            <person name="Himmelbauer H."/>
        </authorList>
    </citation>
    <scope>NUCLEOTIDE SEQUENCE [LARGE SCALE GENOMIC DNA]</scope>
    <source>
        <strain>cv. Viroflay</strain>
        <tissue>Leaf</tissue>
    </source>
</reference>
<reference key="6">
    <citation type="journal article" date="2000" name="J. Biol. Chem.">
        <title>The plastid ribosomal proteins. Identification of all the proteins in the 30S subunit of an organelle ribosome (chloroplast).</title>
        <authorList>
            <person name="Yamaguchi K."/>
            <person name="von Knoblauch K."/>
            <person name="Subramanian A.R."/>
        </authorList>
    </citation>
    <scope>PROTEIN SEQUENCE OF 67-72</scope>
    <scope>MASS SPECTROMETRY</scope>
    <source>
        <strain>cv. Alwaro</strain>
        <tissue>Leaf</tissue>
    </source>
</reference>
<reference key="7">
    <citation type="journal article" date="2007" name="Proc. Natl. Acad. Sci. U.S.A.">
        <title>Cryo-EM study of the spinach chloroplast ribosome reveals the structural and functional roles of plastid-specific ribosomal proteins.</title>
        <authorList>
            <person name="Sharma M.R."/>
            <person name="Wilson D.N."/>
            <person name="Datta P.P."/>
            <person name="Barat C."/>
            <person name="Schluenzen F."/>
            <person name="Fucini P."/>
            <person name="Agrawal R.K."/>
        </authorList>
    </citation>
    <scope>MODELING ON THE 70S RIBOSOME</scope>
    <scope>RNA-BINDING</scope>
    <scope>INTERACTION WITH PROTEINS S9; S13 AND RRF</scope>
</reference>
<reference key="8">
    <citation type="journal article" date="2010" name="J. Biol. Chem.">
        <title>PSRP1 is not a ribosomal protein, but a ribosome-binding factor that is recycled by the ribosome-recycling factor (RRF) and elongation factor G (EF-G).</title>
        <authorList>
            <person name="Sharma M.R."/>
            <person name="Donhofer A."/>
            <person name="Barat C."/>
            <person name="Marquez V."/>
            <person name="Datta P.P."/>
            <person name="Fucini P."/>
            <person name="Wilson D.N."/>
            <person name="Agrawal R.K."/>
        </authorList>
    </citation>
    <scope>FUNCTION IN STABILIZATION OF THE RIBOSOME</scope>
    <scope>CRYOELECTRON MICROSCOPY</scope>
    <scope>RIBOSOME-BINDING</scope>
    <scope>NOT A RIBOSOMAL PROTEIN</scope>
</reference>
<reference key="9">
    <citation type="journal article" date="2017" name="EMBO J.">
        <title>The complete structure of the chloroplast 70S ribosome in complex with translation factor pY.</title>
        <authorList>
            <person name="Bieri P."/>
            <person name="Leibundgut M."/>
            <person name="Saurer M."/>
            <person name="Boehringer D."/>
            <person name="Ban N."/>
        </authorList>
    </citation>
    <scope>STRUCTURE BY ELECTRON MICROSCOPY (3.40 ANGSTROMS)</scope>
    <scope>FUNCTION</scope>
    <scope>SUBUNIT</scope>
    <scope>SUBCELLULAR LOCATION</scope>
</reference>
<dbReference type="EMBL" id="X15344">
    <property type="protein sequence ID" value="CAA33403.1"/>
    <property type="molecule type" value="mRNA"/>
</dbReference>
<dbReference type="EMBL" id="M55322">
    <property type="protein sequence ID" value="AAA34039.1"/>
    <property type="molecule type" value="mRNA"/>
</dbReference>
<dbReference type="EMBL" id="X59270">
    <property type="protein sequence ID" value="CAA41960.1"/>
    <property type="molecule type" value="Genomic_DNA"/>
</dbReference>
<dbReference type="EMBL" id="KQ180281">
    <property type="protein sequence ID" value="KNA06792.1"/>
    <property type="molecule type" value="Genomic_DNA"/>
</dbReference>
<dbReference type="PIR" id="S19131">
    <property type="entry name" value="R3SPS5"/>
</dbReference>
<dbReference type="PDB" id="5MMJ">
    <property type="method" value="EM"/>
    <property type="resolution" value="3.65 A"/>
    <property type="chains" value="y=1-302"/>
</dbReference>
<dbReference type="PDB" id="5MMM">
    <property type="method" value="EM"/>
    <property type="resolution" value="3.40 A"/>
    <property type="chains" value="y=1-302"/>
</dbReference>
<dbReference type="PDB" id="5X8P">
    <property type="method" value="EM"/>
    <property type="resolution" value="3.40 A"/>
    <property type="chains" value="y=67-302"/>
</dbReference>
<dbReference type="PDB" id="5X8R">
    <property type="method" value="EM"/>
    <property type="resolution" value="3.70 A"/>
    <property type="chains" value="y=67-302"/>
</dbReference>
<dbReference type="PDB" id="6ERI">
    <property type="method" value="EM"/>
    <property type="resolution" value="3.00 A"/>
    <property type="chains" value="BV=73-178"/>
</dbReference>
<dbReference type="PDBsum" id="5MMJ"/>
<dbReference type="PDBsum" id="5MMM"/>
<dbReference type="PDBsum" id="5X8P"/>
<dbReference type="PDBsum" id="5X8R"/>
<dbReference type="PDBsum" id="6ERI"/>
<dbReference type="EMDB" id="EMD-3532"/>
<dbReference type="EMDB" id="EMD-3533"/>
<dbReference type="EMDB" id="EMD-3941"/>
<dbReference type="EMDB" id="EMD-6709"/>
<dbReference type="EMDB" id="EMD-6710"/>
<dbReference type="SMR" id="P19954"/>
<dbReference type="STRING" id="3562.P19954"/>
<dbReference type="Proteomes" id="UP001155700">
    <property type="component" value="Unplaced"/>
</dbReference>
<dbReference type="GO" id="GO:0009570">
    <property type="term" value="C:chloroplast stroma"/>
    <property type="evidence" value="ECO:0007669"/>
    <property type="project" value="UniProtKB-SubCell"/>
</dbReference>
<dbReference type="GO" id="GO:0022627">
    <property type="term" value="C:cytosolic small ribosomal subunit"/>
    <property type="evidence" value="ECO:0000318"/>
    <property type="project" value="GO_Central"/>
</dbReference>
<dbReference type="GO" id="GO:0043024">
    <property type="term" value="F:ribosomal small subunit binding"/>
    <property type="evidence" value="ECO:0000318"/>
    <property type="project" value="GO_Central"/>
</dbReference>
<dbReference type="GO" id="GO:0019843">
    <property type="term" value="F:rRNA binding"/>
    <property type="evidence" value="ECO:0007669"/>
    <property type="project" value="UniProtKB-KW"/>
</dbReference>
<dbReference type="GO" id="GO:0045900">
    <property type="term" value="P:negative regulation of translational elongation"/>
    <property type="evidence" value="ECO:0000318"/>
    <property type="project" value="GO_Central"/>
</dbReference>
<dbReference type="CDD" id="cd00552">
    <property type="entry name" value="RaiA"/>
    <property type="match status" value="1"/>
</dbReference>
<dbReference type="FunFam" id="3.30.160.100:FF:000006">
    <property type="entry name" value="Ribosome-binding factor PSRP1, chloroplastic"/>
    <property type="match status" value="1"/>
</dbReference>
<dbReference type="FunFam" id="3.30.505.50:FF:000003">
    <property type="entry name" value="ribosome-binding factor PSRP1, chloroplastic"/>
    <property type="match status" value="1"/>
</dbReference>
<dbReference type="Gene3D" id="3.30.160.100">
    <property type="entry name" value="Ribosome hibernation promotion factor-like"/>
    <property type="match status" value="1"/>
</dbReference>
<dbReference type="Gene3D" id="3.30.505.50">
    <property type="entry name" value="Sigma 54 modulation/S30EA ribosomal protein, C-terminal domain"/>
    <property type="match status" value="1"/>
</dbReference>
<dbReference type="HAMAP" id="MF_00839">
    <property type="entry name" value="HPF"/>
    <property type="match status" value="1"/>
</dbReference>
<dbReference type="InterPro" id="IPR050574">
    <property type="entry name" value="HPF/YfiA_ribosome-assoc"/>
</dbReference>
<dbReference type="InterPro" id="IPR034694">
    <property type="entry name" value="HPF_long/plastid"/>
</dbReference>
<dbReference type="InterPro" id="IPR036567">
    <property type="entry name" value="RHF-like"/>
</dbReference>
<dbReference type="InterPro" id="IPR003489">
    <property type="entry name" value="RHF/RaiA"/>
</dbReference>
<dbReference type="InterPro" id="IPR032528">
    <property type="entry name" value="Ribosom_S30AE_C"/>
</dbReference>
<dbReference type="InterPro" id="IPR038416">
    <property type="entry name" value="Ribosom_S30AE_C_sf"/>
</dbReference>
<dbReference type="NCBIfam" id="TIGR00741">
    <property type="entry name" value="yfiA"/>
    <property type="match status" value="1"/>
</dbReference>
<dbReference type="PANTHER" id="PTHR33231">
    <property type="entry name" value="30S RIBOSOMAL PROTEIN"/>
    <property type="match status" value="1"/>
</dbReference>
<dbReference type="PANTHER" id="PTHR33231:SF1">
    <property type="entry name" value="30S RIBOSOMAL PROTEIN"/>
    <property type="match status" value="1"/>
</dbReference>
<dbReference type="Pfam" id="PF16321">
    <property type="entry name" value="Ribosom_S30AE_C"/>
    <property type="match status" value="1"/>
</dbReference>
<dbReference type="Pfam" id="PF02482">
    <property type="entry name" value="Ribosomal_S30AE"/>
    <property type="match status" value="1"/>
</dbReference>
<dbReference type="SUPFAM" id="SSF69754">
    <property type="entry name" value="Ribosome binding protein Y (YfiA homologue)"/>
    <property type="match status" value="1"/>
</dbReference>
<sequence>MATLCTSAINMNPNLTNSLSNSINLSSTPTNLSSLRSTFTNSCSLGLNVAVKSVQISRNKPNVVCMSWDGPLSSVKLILQGRNLEVSDNVRSHVEDKVGKSVAKHSHLVREVDVRLSARGGDLSKGPKLRRCEVTLFTKRHGVIRAEEDAESLYSSIDLVSSIIQRKLRKIKDKVSDHGRHMKGFNRSKVRDPEPVRITREEVLEEVESAPAPVSVEDDDFIEEVVRTKYFDMPPLTITEAVEQLENVDHDFYAFRNEETGDINILYKRKEGGYGLIIPKDGKTEKLESLPVQTDKQPSFAE</sequence>